<gene>
    <name type="primary">Adsl</name>
    <name type="synonym">Adl</name>
</gene>
<name>PUR8_MOUSE</name>
<feature type="initiator methionine" description="Removed" evidence="2">
    <location>
        <position position="1"/>
    </location>
</feature>
<feature type="chain" id="PRO_0000137894" description="Adenylosuccinate lyase">
    <location>
        <begin position="2"/>
        <end position="484"/>
    </location>
</feature>
<feature type="active site" description="Proton donor/acceptor" evidence="1">
    <location>
        <position position="159"/>
    </location>
</feature>
<feature type="active site" description="Proton donor/acceptor" evidence="1">
    <location>
        <position position="289"/>
    </location>
</feature>
<feature type="binding site" evidence="1">
    <location>
        <begin position="20"/>
        <end position="21"/>
    </location>
    <ligand>
        <name>substrate</name>
        <note>ligand shared between two neighboring subunits</note>
    </ligand>
</feature>
<feature type="binding site" description="in other chain" evidence="1">
    <location>
        <begin position="85"/>
        <end position="87"/>
    </location>
    <ligand>
        <name>substrate</name>
        <note>ligand shared between two neighboring subunits</note>
    </ligand>
</feature>
<feature type="binding site" description="in other chain" evidence="1">
    <location>
        <begin position="111"/>
        <end position="112"/>
    </location>
    <ligand>
        <name>substrate</name>
        <note>ligand shared between two neighboring subunits</note>
    </ligand>
</feature>
<feature type="binding site" description="in other chain" evidence="1">
    <location>
        <position position="241"/>
    </location>
    <ligand>
        <name>substrate</name>
        <note>ligand shared between two neighboring subunits</note>
    </ligand>
</feature>
<feature type="binding site" evidence="1">
    <location>
        <position position="303"/>
    </location>
    <ligand>
        <name>substrate</name>
        <note>ligand shared between two neighboring subunits</note>
    </ligand>
</feature>
<feature type="binding site" description="in other chain" evidence="1">
    <location>
        <position position="329"/>
    </location>
    <ligand>
        <name>substrate</name>
        <note>ligand shared between two neighboring subunits</note>
    </ligand>
</feature>
<feature type="binding site" description="in other chain" evidence="1">
    <location>
        <position position="334"/>
    </location>
    <ligand>
        <name>substrate</name>
        <note>ligand shared between two neighboring subunits</note>
    </ligand>
</feature>
<feature type="binding site" description="in other chain" evidence="1">
    <location>
        <position position="338"/>
    </location>
    <ligand>
        <name>substrate</name>
        <note>ligand shared between two neighboring subunits</note>
    </ligand>
</feature>
<feature type="modified residue" description="N-acetylalanine" evidence="2">
    <location>
        <position position="2"/>
    </location>
</feature>
<feature type="modified residue" description="N6-acetyllysine" evidence="2">
    <location>
        <position position="147"/>
    </location>
</feature>
<feature type="modified residue" description="N6-acetyllysine" evidence="2">
    <location>
        <position position="295"/>
    </location>
</feature>
<feature type="cross-link" description="Glycyl lysine isopeptide (Lys-Gly) (interchain with G-Cter in SUMO1)" evidence="2">
    <location>
        <position position="415"/>
    </location>
</feature>
<feature type="sequence conflict" description="In Ref. 1; AAB60684." evidence="3" ref="1">
    <original>LC</original>
    <variation>SV</variation>
    <location>
        <begin position="179"/>
        <end position="180"/>
    </location>
</feature>
<feature type="sequence conflict" description="In Ref. 1; AAB60684." evidence="3" ref="1">
    <original>EL</original>
    <variation>DV</variation>
    <location>
        <begin position="192"/>
        <end position="193"/>
    </location>
</feature>
<dbReference type="EC" id="4.3.2.2" evidence="2"/>
<dbReference type="EMBL" id="U20225">
    <property type="protein sequence ID" value="AAB60684.1"/>
    <property type="molecule type" value="mRNA"/>
</dbReference>
<dbReference type="EMBL" id="AK049372">
    <property type="protein sequence ID" value="BAC33717.1"/>
    <property type="molecule type" value="mRNA"/>
</dbReference>
<dbReference type="EMBL" id="AK051111">
    <property type="protein sequence ID" value="BAC34529.1"/>
    <property type="molecule type" value="mRNA"/>
</dbReference>
<dbReference type="EMBL" id="AK152092">
    <property type="protein sequence ID" value="BAE30940.1"/>
    <property type="molecule type" value="mRNA"/>
</dbReference>
<dbReference type="EMBL" id="AK168906">
    <property type="protein sequence ID" value="BAE40720.1"/>
    <property type="molecule type" value="mRNA"/>
</dbReference>
<dbReference type="EMBL" id="AK171725">
    <property type="protein sequence ID" value="BAE42633.1"/>
    <property type="molecule type" value="mRNA"/>
</dbReference>
<dbReference type="EMBL" id="CH466550">
    <property type="protein sequence ID" value="EDL04592.1"/>
    <property type="molecule type" value="Genomic_DNA"/>
</dbReference>
<dbReference type="EMBL" id="BC020187">
    <property type="protein sequence ID" value="AAH20187.1"/>
    <property type="molecule type" value="mRNA"/>
</dbReference>
<dbReference type="CCDS" id="CCDS27664.1"/>
<dbReference type="RefSeq" id="NP_033764.2">
    <property type="nucleotide sequence ID" value="NM_009634.6"/>
</dbReference>
<dbReference type="SMR" id="P54822"/>
<dbReference type="BioGRID" id="198009">
    <property type="interactions" value="29"/>
</dbReference>
<dbReference type="FunCoup" id="P54822">
    <property type="interactions" value="2760"/>
</dbReference>
<dbReference type="IntAct" id="P54822">
    <property type="interactions" value="1"/>
</dbReference>
<dbReference type="STRING" id="10090.ENSMUSP00000023043"/>
<dbReference type="GlyGen" id="P54822">
    <property type="glycosylation" value="1 site, 1 O-linked glycan (1 site)"/>
</dbReference>
<dbReference type="iPTMnet" id="P54822"/>
<dbReference type="PhosphoSitePlus" id="P54822"/>
<dbReference type="SwissPalm" id="P54822"/>
<dbReference type="jPOST" id="P54822"/>
<dbReference type="PaxDb" id="10090-ENSMUSP00000023043"/>
<dbReference type="PeptideAtlas" id="P54822"/>
<dbReference type="ProteomicsDB" id="300278"/>
<dbReference type="Pumba" id="P54822"/>
<dbReference type="Antibodypedia" id="34889">
    <property type="antibodies" value="249 antibodies from 27 providers"/>
</dbReference>
<dbReference type="DNASU" id="11564"/>
<dbReference type="Ensembl" id="ENSMUST00000023043.10">
    <property type="protein sequence ID" value="ENSMUSP00000023043.3"/>
    <property type="gene ID" value="ENSMUSG00000022407.11"/>
</dbReference>
<dbReference type="GeneID" id="11564"/>
<dbReference type="KEGG" id="mmu:11564"/>
<dbReference type="UCSC" id="uc007wvz.2">
    <property type="organism name" value="mouse"/>
</dbReference>
<dbReference type="AGR" id="MGI:103202"/>
<dbReference type="CTD" id="158"/>
<dbReference type="MGI" id="MGI:103202">
    <property type="gene designation" value="Adsl"/>
</dbReference>
<dbReference type="VEuPathDB" id="HostDB:ENSMUSG00000022407"/>
<dbReference type="eggNOG" id="KOG2700">
    <property type="taxonomic scope" value="Eukaryota"/>
</dbReference>
<dbReference type="GeneTree" id="ENSGT00950000183122"/>
<dbReference type="InParanoid" id="P54822"/>
<dbReference type="OMA" id="VQENAMK"/>
<dbReference type="OrthoDB" id="406045at2759"/>
<dbReference type="PhylomeDB" id="P54822"/>
<dbReference type="TreeFam" id="TF106385"/>
<dbReference type="Reactome" id="R-MMU-73817">
    <property type="pathway name" value="Purine ribonucleoside monophosphate biosynthesis"/>
</dbReference>
<dbReference type="UniPathway" id="UPA00074">
    <property type="reaction ID" value="UER00132"/>
</dbReference>
<dbReference type="UniPathway" id="UPA00075">
    <property type="reaction ID" value="UER00336"/>
</dbReference>
<dbReference type="BioGRID-ORCS" id="11564">
    <property type="hits" value="25 hits in 79 CRISPR screens"/>
</dbReference>
<dbReference type="ChiTaRS" id="Adsl">
    <property type="organism name" value="mouse"/>
</dbReference>
<dbReference type="PRO" id="PR:P54822"/>
<dbReference type="Proteomes" id="UP000000589">
    <property type="component" value="Chromosome 15"/>
</dbReference>
<dbReference type="RNAct" id="P54822">
    <property type="molecule type" value="protein"/>
</dbReference>
<dbReference type="Bgee" id="ENSMUSG00000022407">
    <property type="expression patterns" value="Expressed in hindlimb stylopod muscle and 284 other cell types or tissues"/>
</dbReference>
<dbReference type="ExpressionAtlas" id="P54822">
    <property type="expression patterns" value="baseline and differential"/>
</dbReference>
<dbReference type="GO" id="GO:0005829">
    <property type="term" value="C:cytosol"/>
    <property type="evidence" value="ECO:0007669"/>
    <property type="project" value="Ensembl"/>
</dbReference>
<dbReference type="GO" id="GO:0005739">
    <property type="term" value="C:mitochondrion"/>
    <property type="evidence" value="ECO:0007005"/>
    <property type="project" value="MGI"/>
</dbReference>
<dbReference type="GO" id="GO:0032991">
    <property type="term" value="C:protein-containing complex"/>
    <property type="evidence" value="ECO:0007669"/>
    <property type="project" value="Ensembl"/>
</dbReference>
<dbReference type="GO" id="GO:0070626">
    <property type="term" value="F:(S)-2-(5-amino-1-(5-phospho-D-ribosyl)imidazole-4-carboxamido) succinate lyase (fumarate-forming) activity"/>
    <property type="evidence" value="ECO:0000315"/>
    <property type="project" value="MGI"/>
</dbReference>
<dbReference type="GO" id="GO:0042802">
    <property type="term" value="F:identical protein binding"/>
    <property type="evidence" value="ECO:0007669"/>
    <property type="project" value="Ensembl"/>
</dbReference>
<dbReference type="GO" id="GO:0004018">
    <property type="term" value="F:N6-(1,2-dicarboxyethyl)AMP AMP-lyase (fumarate-forming) activity"/>
    <property type="evidence" value="ECO:0000314"/>
    <property type="project" value="MGI"/>
</dbReference>
<dbReference type="GO" id="GO:0044208">
    <property type="term" value="P:'de novo' AMP biosynthetic process"/>
    <property type="evidence" value="ECO:0000314"/>
    <property type="project" value="MGI"/>
</dbReference>
<dbReference type="GO" id="GO:0006189">
    <property type="term" value="P:'de novo' IMP biosynthetic process"/>
    <property type="evidence" value="ECO:0000315"/>
    <property type="project" value="MGI"/>
</dbReference>
<dbReference type="GO" id="GO:0097294">
    <property type="term" value="P:'de novo' XMP biosynthetic process"/>
    <property type="evidence" value="ECO:0000315"/>
    <property type="project" value="MGI"/>
</dbReference>
<dbReference type="GO" id="GO:0009060">
    <property type="term" value="P:aerobic respiration"/>
    <property type="evidence" value="ECO:0007669"/>
    <property type="project" value="Ensembl"/>
</dbReference>
<dbReference type="GO" id="GO:0006167">
    <property type="term" value="P:AMP biosynthetic process"/>
    <property type="evidence" value="ECO:0000247"/>
    <property type="project" value="MGI"/>
</dbReference>
<dbReference type="GO" id="GO:0044209">
    <property type="term" value="P:AMP salvage"/>
    <property type="evidence" value="ECO:0000314"/>
    <property type="project" value="MGI"/>
</dbReference>
<dbReference type="GO" id="GO:0006177">
    <property type="term" value="P:GMP biosynthetic process"/>
    <property type="evidence" value="ECO:0000315"/>
    <property type="project" value="MGI"/>
</dbReference>
<dbReference type="GO" id="GO:0001666">
    <property type="term" value="P:response to hypoxia"/>
    <property type="evidence" value="ECO:0007669"/>
    <property type="project" value="Ensembl"/>
</dbReference>
<dbReference type="GO" id="GO:0014850">
    <property type="term" value="P:response to muscle activity"/>
    <property type="evidence" value="ECO:0007669"/>
    <property type="project" value="Ensembl"/>
</dbReference>
<dbReference type="GO" id="GO:0007584">
    <property type="term" value="P:response to nutrient"/>
    <property type="evidence" value="ECO:0007669"/>
    <property type="project" value="Ensembl"/>
</dbReference>
<dbReference type="GO" id="GO:0042594">
    <property type="term" value="P:response to starvation"/>
    <property type="evidence" value="ECO:0007669"/>
    <property type="project" value="Ensembl"/>
</dbReference>
<dbReference type="CDD" id="cd03302">
    <property type="entry name" value="Adenylsuccinate_lyase_2"/>
    <property type="match status" value="1"/>
</dbReference>
<dbReference type="FunFam" id="1.10.275.60:FF:000001">
    <property type="entry name" value="Adenylosuccinate lyase"/>
    <property type="match status" value="1"/>
</dbReference>
<dbReference type="FunFam" id="1.10.40.30:FF:000005">
    <property type="entry name" value="Adenylosuccinate lyase"/>
    <property type="match status" value="1"/>
</dbReference>
<dbReference type="Gene3D" id="1.10.275.60">
    <property type="match status" value="1"/>
</dbReference>
<dbReference type="Gene3D" id="1.10.40.30">
    <property type="entry name" value="Fumarase/aspartase (C-terminal domain)"/>
    <property type="match status" value="1"/>
</dbReference>
<dbReference type="Gene3D" id="1.20.200.10">
    <property type="entry name" value="Fumarase/aspartase (Central domain)"/>
    <property type="match status" value="1"/>
</dbReference>
<dbReference type="InterPro" id="IPR019468">
    <property type="entry name" value="AdenyloSucc_lyase_C"/>
</dbReference>
<dbReference type="InterPro" id="IPR020557">
    <property type="entry name" value="Fumarate_lyase_CS"/>
</dbReference>
<dbReference type="InterPro" id="IPR000362">
    <property type="entry name" value="Fumarate_lyase_fam"/>
</dbReference>
<dbReference type="InterPro" id="IPR022761">
    <property type="entry name" value="Fumarate_lyase_N"/>
</dbReference>
<dbReference type="InterPro" id="IPR008948">
    <property type="entry name" value="L-Aspartase-like"/>
</dbReference>
<dbReference type="InterPro" id="IPR004769">
    <property type="entry name" value="Pur_lyase"/>
</dbReference>
<dbReference type="NCBIfam" id="TIGR00928">
    <property type="entry name" value="purB"/>
    <property type="match status" value="1"/>
</dbReference>
<dbReference type="PANTHER" id="PTHR43172">
    <property type="entry name" value="ADENYLOSUCCINATE LYASE"/>
    <property type="match status" value="1"/>
</dbReference>
<dbReference type="PANTHER" id="PTHR43172:SF1">
    <property type="entry name" value="ADENYLOSUCCINATE LYASE"/>
    <property type="match status" value="1"/>
</dbReference>
<dbReference type="Pfam" id="PF10397">
    <property type="entry name" value="ADSL_C"/>
    <property type="match status" value="1"/>
</dbReference>
<dbReference type="Pfam" id="PF00206">
    <property type="entry name" value="Lyase_1"/>
    <property type="match status" value="1"/>
</dbReference>
<dbReference type="PRINTS" id="PR00145">
    <property type="entry name" value="ARGSUCLYASE"/>
</dbReference>
<dbReference type="PRINTS" id="PR00149">
    <property type="entry name" value="FUMRATELYASE"/>
</dbReference>
<dbReference type="SMART" id="SM00998">
    <property type="entry name" value="ADSL_C"/>
    <property type="match status" value="1"/>
</dbReference>
<dbReference type="SUPFAM" id="SSF48557">
    <property type="entry name" value="L-aspartase-like"/>
    <property type="match status" value="1"/>
</dbReference>
<dbReference type="PROSITE" id="PS00163">
    <property type="entry name" value="FUMARATE_LYASES"/>
    <property type="match status" value="1"/>
</dbReference>
<sequence>MAASGDPGSAESYRSPLAARYASREMCFLFSDRYKFQTWRQLWLWLAEAEQTLGLPITDEQIQEMKSNLNNIDFQMAAEEEKRLRHDVMAHVHTFGHCCPKAAGIIHLGATSCYVGDNTDLIILRNAFDLLLPKLARVISRLADFAKDRADLPTLGFTHFQPAQLTTVGKRCCLWIQDLCMDLQNLKRVRDELRFRGVKGTTGTQASFLQLFEGDHQKVEQLDKMVTEKAGFKRAFIITGQTYTRKVDIEVLSVLASLGASVHKICTDIRLLANLKEMEEPFEKQQIGSSAMPYKRNPMRSERCCSLARHLMALTMDPLQTASVQWFERTLDDSANRRICLAEAFLTADTILNTLQNISEGLVVYPKVIERRIRQELPFMATENIIMAMVKAGGSRQDCHEKIRVLSQQAAAVVKQEGGDNDLIERIRADAYFSPIHSQLEHLLDPSSFTGRAPQQVHRFLEEEVRPLLKPYGNEMAVKAELCL</sequence>
<evidence type="ECO:0000250" key="1"/>
<evidence type="ECO:0000250" key="2">
    <source>
        <dbReference type="UniProtKB" id="P30566"/>
    </source>
</evidence>
<evidence type="ECO:0000305" key="3"/>
<comment type="function">
    <text evidence="2">Catalyzes two non-sequential steps in de novo AMP synthesis: converts (S)-2-(5-amino-1-(5-phospho-D-ribosyl)imidazole-4-carboxamido)succinate (SAICAR) to fumarate plus 5-amino-1-(5-phospho-D-ribosyl)imidazole-4-carboxamide, and thereby also contributes to de novo IMP synthesis, and converts succinyladenosine monophosphate (SAMP) to AMP and fumarate.</text>
</comment>
<comment type="catalytic activity">
    <reaction evidence="2">
        <text>N(6)-(1,2-dicarboxyethyl)-AMP = fumarate + AMP</text>
        <dbReference type="Rhea" id="RHEA:16853"/>
        <dbReference type="ChEBI" id="CHEBI:29806"/>
        <dbReference type="ChEBI" id="CHEBI:57567"/>
        <dbReference type="ChEBI" id="CHEBI:456215"/>
        <dbReference type="EC" id="4.3.2.2"/>
    </reaction>
</comment>
<comment type="catalytic activity">
    <reaction evidence="2">
        <text>(2S)-2-[5-amino-1-(5-phospho-beta-D-ribosyl)imidazole-4-carboxamido]succinate = 5-amino-1-(5-phospho-beta-D-ribosyl)imidazole-4-carboxamide + fumarate</text>
        <dbReference type="Rhea" id="RHEA:23920"/>
        <dbReference type="ChEBI" id="CHEBI:29806"/>
        <dbReference type="ChEBI" id="CHEBI:58443"/>
        <dbReference type="ChEBI" id="CHEBI:58475"/>
        <dbReference type="EC" id="4.3.2.2"/>
    </reaction>
</comment>
<comment type="pathway">
    <text>Purine metabolism; AMP biosynthesis via de novo pathway; AMP from IMP: step 2/2.</text>
</comment>
<comment type="pathway">
    <text>Purine metabolism; IMP biosynthesis via de novo pathway; 5-amino-1-(5-phospho-D-ribosyl)imidazole-4-carboxamide from 5-amino-1-(5-phospho-D-ribosyl)imidazole-4-carboxylate: step 2/2.</text>
</comment>
<comment type="subunit">
    <text evidence="2">Homotetramer. Residues from neighboring subunits contribute catalytic and substrate-binding residues to each active site.</text>
</comment>
<comment type="similarity">
    <text evidence="3">Belongs to the lyase 1 family. Adenylosuccinate lyase subfamily.</text>
</comment>
<reference key="1">
    <citation type="journal article" date="1995" name="Genomics">
        <title>Characterization of the cDNA and the gene encoding murine adenylosuccinate lyase.</title>
        <authorList>
            <person name="Wong L.J."/>
            <person name="O'Brien W.E."/>
        </authorList>
    </citation>
    <scope>NUCLEOTIDE SEQUENCE [MRNA]</scope>
    <source>
        <strain>129</strain>
        <tissue>Kidney</tissue>
    </source>
</reference>
<reference key="2">
    <citation type="journal article" date="2005" name="Science">
        <title>The transcriptional landscape of the mammalian genome.</title>
        <authorList>
            <person name="Carninci P."/>
            <person name="Kasukawa T."/>
            <person name="Katayama S."/>
            <person name="Gough J."/>
            <person name="Frith M.C."/>
            <person name="Maeda N."/>
            <person name="Oyama R."/>
            <person name="Ravasi T."/>
            <person name="Lenhard B."/>
            <person name="Wells C."/>
            <person name="Kodzius R."/>
            <person name="Shimokawa K."/>
            <person name="Bajic V.B."/>
            <person name="Brenner S.E."/>
            <person name="Batalov S."/>
            <person name="Forrest A.R."/>
            <person name="Zavolan M."/>
            <person name="Davis M.J."/>
            <person name="Wilming L.G."/>
            <person name="Aidinis V."/>
            <person name="Allen J.E."/>
            <person name="Ambesi-Impiombato A."/>
            <person name="Apweiler R."/>
            <person name="Aturaliya R.N."/>
            <person name="Bailey T.L."/>
            <person name="Bansal M."/>
            <person name="Baxter L."/>
            <person name="Beisel K.W."/>
            <person name="Bersano T."/>
            <person name="Bono H."/>
            <person name="Chalk A.M."/>
            <person name="Chiu K.P."/>
            <person name="Choudhary V."/>
            <person name="Christoffels A."/>
            <person name="Clutterbuck D.R."/>
            <person name="Crowe M.L."/>
            <person name="Dalla E."/>
            <person name="Dalrymple B.P."/>
            <person name="de Bono B."/>
            <person name="Della Gatta G."/>
            <person name="di Bernardo D."/>
            <person name="Down T."/>
            <person name="Engstrom P."/>
            <person name="Fagiolini M."/>
            <person name="Faulkner G."/>
            <person name="Fletcher C.F."/>
            <person name="Fukushima T."/>
            <person name="Furuno M."/>
            <person name="Futaki S."/>
            <person name="Gariboldi M."/>
            <person name="Georgii-Hemming P."/>
            <person name="Gingeras T.R."/>
            <person name="Gojobori T."/>
            <person name="Green R.E."/>
            <person name="Gustincich S."/>
            <person name="Harbers M."/>
            <person name="Hayashi Y."/>
            <person name="Hensch T.K."/>
            <person name="Hirokawa N."/>
            <person name="Hill D."/>
            <person name="Huminiecki L."/>
            <person name="Iacono M."/>
            <person name="Ikeo K."/>
            <person name="Iwama A."/>
            <person name="Ishikawa T."/>
            <person name="Jakt M."/>
            <person name="Kanapin A."/>
            <person name="Katoh M."/>
            <person name="Kawasawa Y."/>
            <person name="Kelso J."/>
            <person name="Kitamura H."/>
            <person name="Kitano H."/>
            <person name="Kollias G."/>
            <person name="Krishnan S.P."/>
            <person name="Kruger A."/>
            <person name="Kummerfeld S.K."/>
            <person name="Kurochkin I.V."/>
            <person name="Lareau L.F."/>
            <person name="Lazarevic D."/>
            <person name="Lipovich L."/>
            <person name="Liu J."/>
            <person name="Liuni S."/>
            <person name="McWilliam S."/>
            <person name="Madan Babu M."/>
            <person name="Madera M."/>
            <person name="Marchionni L."/>
            <person name="Matsuda H."/>
            <person name="Matsuzawa S."/>
            <person name="Miki H."/>
            <person name="Mignone F."/>
            <person name="Miyake S."/>
            <person name="Morris K."/>
            <person name="Mottagui-Tabar S."/>
            <person name="Mulder N."/>
            <person name="Nakano N."/>
            <person name="Nakauchi H."/>
            <person name="Ng P."/>
            <person name="Nilsson R."/>
            <person name="Nishiguchi S."/>
            <person name="Nishikawa S."/>
            <person name="Nori F."/>
            <person name="Ohara O."/>
            <person name="Okazaki Y."/>
            <person name="Orlando V."/>
            <person name="Pang K.C."/>
            <person name="Pavan W.J."/>
            <person name="Pavesi G."/>
            <person name="Pesole G."/>
            <person name="Petrovsky N."/>
            <person name="Piazza S."/>
            <person name="Reed J."/>
            <person name="Reid J.F."/>
            <person name="Ring B.Z."/>
            <person name="Ringwald M."/>
            <person name="Rost B."/>
            <person name="Ruan Y."/>
            <person name="Salzberg S.L."/>
            <person name="Sandelin A."/>
            <person name="Schneider C."/>
            <person name="Schoenbach C."/>
            <person name="Sekiguchi K."/>
            <person name="Semple C.A."/>
            <person name="Seno S."/>
            <person name="Sessa L."/>
            <person name="Sheng Y."/>
            <person name="Shibata Y."/>
            <person name="Shimada H."/>
            <person name="Shimada K."/>
            <person name="Silva D."/>
            <person name="Sinclair B."/>
            <person name="Sperling S."/>
            <person name="Stupka E."/>
            <person name="Sugiura K."/>
            <person name="Sultana R."/>
            <person name="Takenaka Y."/>
            <person name="Taki K."/>
            <person name="Tammoja K."/>
            <person name="Tan S.L."/>
            <person name="Tang S."/>
            <person name="Taylor M.S."/>
            <person name="Tegner J."/>
            <person name="Teichmann S.A."/>
            <person name="Ueda H.R."/>
            <person name="van Nimwegen E."/>
            <person name="Verardo R."/>
            <person name="Wei C.L."/>
            <person name="Yagi K."/>
            <person name="Yamanishi H."/>
            <person name="Zabarovsky E."/>
            <person name="Zhu S."/>
            <person name="Zimmer A."/>
            <person name="Hide W."/>
            <person name="Bult C."/>
            <person name="Grimmond S.M."/>
            <person name="Teasdale R.D."/>
            <person name="Liu E.T."/>
            <person name="Brusic V."/>
            <person name="Quackenbush J."/>
            <person name="Wahlestedt C."/>
            <person name="Mattick J.S."/>
            <person name="Hume D.A."/>
            <person name="Kai C."/>
            <person name="Sasaki D."/>
            <person name="Tomaru Y."/>
            <person name="Fukuda S."/>
            <person name="Kanamori-Katayama M."/>
            <person name="Suzuki M."/>
            <person name="Aoki J."/>
            <person name="Arakawa T."/>
            <person name="Iida J."/>
            <person name="Imamura K."/>
            <person name="Itoh M."/>
            <person name="Kato T."/>
            <person name="Kawaji H."/>
            <person name="Kawagashira N."/>
            <person name="Kawashima T."/>
            <person name="Kojima M."/>
            <person name="Kondo S."/>
            <person name="Konno H."/>
            <person name="Nakano K."/>
            <person name="Ninomiya N."/>
            <person name="Nishio T."/>
            <person name="Okada M."/>
            <person name="Plessy C."/>
            <person name="Shibata K."/>
            <person name="Shiraki T."/>
            <person name="Suzuki S."/>
            <person name="Tagami M."/>
            <person name="Waki K."/>
            <person name="Watahiki A."/>
            <person name="Okamura-Oho Y."/>
            <person name="Suzuki H."/>
            <person name="Kawai J."/>
            <person name="Hayashizaki Y."/>
        </authorList>
    </citation>
    <scope>NUCLEOTIDE SEQUENCE [LARGE SCALE MRNA]</scope>
    <source>
        <strain>C57BL/6J</strain>
        <strain>NOD</strain>
        <tissue>Bone marrow</tissue>
        <tissue>Kidney</tissue>
        <tissue>Spleen</tissue>
    </source>
</reference>
<reference key="3">
    <citation type="submission" date="2005-09" db="EMBL/GenBank/DDBJ databases">
        <authorList>
            <person name="Mural R.J."/>
            <person name="Adams M.D."/>
            <person name="Myers E.W."/>
            <person name="Smith H.O."/>
            <person name="Venter J.C."/>
        </authorList>
    </citation>
    <scope>NUCLEOTIDE SEQUENCE [LARGE SCALE GENOMIC DNA]</scope>
</reference>
<reference key="4">
    <citation type="journal article" date="2004" name="Genome Res.">
        <title>The status, quality, and expansion of the NIH full-length cDNA project: the Mammalian Gene Collection (MGC).</title>
        <authorList>
            <consortium name="The MGC Project Team"/>
        </authorList>
    </citation>
    <scope>NUCLEOTIDE SEQUENCE [LARGE SCALE MRNA]</scope>
    <source>
        <strain>FVB/N</strain>
        <tissue>Salivary gland</tissue>
    </source>
</reference>
<reference key="5">
    <citation type="journal article" date="2010" name="Cell">
        <title>A tissue-specific atlas of mouse protein phosphorylation and expression.</title>
        <authorList>
            <person name="Huttlin E.L."/>
            <person name="Jedrychowski M.P."/>
            <person name="Elias J.E."/>
            <person name="Goswami T."/>
            <person name="Rad R."/>
            <person name="Beausoleil S.A."/>
            <person name="Villen J."/>
            <person name="Haas W."/>
            <person name="Sowa M.E."/>
            <person name="Gygi S.P."/>
        </authorList>
    </citation>
    <scope>IDENTIFICATION BY MASS SPECTROMETRY [LARGE SCALE ANALYSIS]</scope>
    <source>
        <tissue>Brain</tissue>
        <tissue>Brown adipose tissue</tissue>
        <tissue>Heart</tissue>
        <tissue>Kidney</tissue>
        <tissue>Liver</tissue>
        <tissue>Lung</tissue>
        <tissue>Pancreas</tissue>
        <tissue>Spleen</tissue>
        <tissue>Testis</tissue>
    </source>
</reference>
<organism>
    <name type="scientific">Mus musculus</name>
    <name type="common">Mouse</name>
    <dbReference type="NCBI Taxonomy" id="10090"/>
    <lineage>
        <taxon>Eukaryota</taxon>
        <taxon>Metazoa</taxon>
        <taxon>Chordata</taxon>
        <taxon>Craniata</taxon>
        <taxon>Vertebrata</taxon>
        <taxon>Euteleostomi</taxon>
        <taxon>Mammalia</taxon>
        <taxon>Eutheria</taxon>
        <taxon>Euarchontoglires</taxon>
        <taxon>Glires</taxon>
        <taxon>Rodentia</taxon>
        <taxon>Myomorpha</taxon>
        <taxon>Muroidea</taxon>
        <taxon>Muridae</taxon>
        <taxon>Murinae</taxon>
        <taxon>Mus</taxon>
        <taxon>Mus</taxon>
    </lineage>
</organism>
<keyword id="KW-0007">Acetylation</keyword>
<keyword id="KW-1017">Isopeptide bond</keyword>
<keyword id="KW-0456">Lyase</keyword>
<keyword id="KW-0658">Purine biosynthesis</keyword>
<keyword id="KW-1185">Reference proteome</keyword>
<keyword id="KW-0832">Ubl conjugation</keyword>
<protein>
    <recommendedName>
        <fullName>Adenylosuccinate lyase</fullName>
        <shortName>ASL</shortName>
        <ecNumber evidence="2">4.3.2.2</ecNumber>
    </recommendedName>
    <alternativeName>
        <fullName>Adenylosuccinase</fullName>
        <shortName>ASase</shortName>
    </alternativeName>
</protein>
<accession>P54822</accession>
<accession>Q8VCD4</accession>
<proteinExistence type="evidence at protein level"/>